<dbReference type="EC" id="1.97.1.12" evidence="1"/>
<dbReference type="EMBL" id="AJ970307">
    <property type="protein sequence ID" value="CAJ00758.1"/>
    <property type="molecule type" value="Genomic_DNA"/>
</dbReference>
<dbReference type="EMBL" id="DQ119058">
    <property type="protein sequence ID" value="AAZ94651.1"/>
    <property type="molecule type" value="Genomic_DNA"/>
</dbReference>
<dbReference type="EMBL" id="DQ865975">
    <property type="protein sequence ID" value="ABI97417.1"/>
    <property type="molecule type" value="Genomic_DNA"/>
</dbReference>
<dbReference type="EMBL" id="DQ865976">
    <property type="protein sequence ID" value="ABI98746.1"/>
    <property type="molecule type" value="Genomic_DNA"/>
</dbReference>
<dbReference type="RefSeq" id="YP_247599.1">
    <property type="nucleotide sequence ID" value="NC_007144.1"/>
</dbReference>
<dbReference type="SMR" id="Q2QD89"/>
<dbReference type="GeneID" id="3429270"/>
<dbReference type="KEGG" id="csv:3429270"/>
<dbReference type="eggNOG" id="ENOG502QRYE">
    <property type="taxonomic scope" value="Eukaryota"/>
</dbReference>
<dbReference type="OrthoDB" id="349at2759"/>
<dbReference type="GO" id="GO:0009535">
    <property type="term" value="C:chloroplast thylakoid membrane"/>
    <property type="evidence" value="ECO:0007669"/>
    <property type="project" value="UniProtKB-SubCell"/>
</dbReference>
<dbReference type="GO" id="GO:0009522">
    <property type="term" value="C:photosystem I"/>
    <property type="evidence" value="ECO:0007669"/>
    <property type="project" value="UniProtKB-KW"/>
</dbReference>
<dbReference type="GO" id="GO:0051539">
    <property type="term" value="F:4 iron, 4 sulfur cluster binding"/>
    <property type="evidence" value="ECO:0007669"/>
    <property type="project" value="UniProtKB-KW"/>
</dbReference>
<dbReference type="GO" id="GO:0016168">
    <property type="term" value="F:chlorophyll binding"/>
    <property type="evidence" value="ECO:0007669"/>
    <property type="project" value="UniProtKB-KW"/>
</dbReference>
<dbReference type="GO" id="GO:0009055">
    <property type="term" value="F:electron transfer activity"/>
    <property type="evidence" value="ECO:0007669"/>
    <property type="project" value="UniProtKB-UniRule"/>
</dbReference>
<dbReference type="GO" id="GO:0000287">
    <property type="term" value="F:magnesium ion binding"/>
    <property type="evidence" value="ECO:0007669"/>
    <property type="project" value="UniProtKB-UniRule"/>
</dbReference>
<dbReference type="GO" id="GO:0016491">
    <property type="term" value="F:oxidoreductase activity"/>
    <property type="evidence" value="ECO:0007669"/>
    <property type="project" value="UniProtKB-KW"/>
</dbReference>
<dbReference type="GO" id="GO:0015979">
    <property type="term" value="P:photosynthesis"/>
    <property type="evidence" value="ECO:0007669"/>
    <property type="project" value="UniProtKB-UniRule"/>
</dbReference>
<dbReference type="FunFam" id="1.20.1130.10:FF:000001">
    <property type="entry name" value="Photosystem I P700 chlorophyll a apoprotein A2"/>
    <property type="match status" value="1"/>
</dbReference>
<dbReference type="Gene3D" id="1.20.1130.10">
    <property type="entry name" value="Photosystem I PsaA/PsaB"/>
    <property type="match status" value="1"/>
</dbReference>
<dbReference type="HAMAP" id="MF_00458">
    <property type="entry name" value="PSI_PsaA"/>
    <property type="match status" value="1"/>
</dbReference>
<dbReference type="InterPro" id="IPR006243">
    <property type="entry name" value="PSI_PsaA"/>
</dbReference>
<dbReference type="InterPro" id="IPR001280">
    <property type="entry name" value="PSI_PsaA/B"/>
</dbReference>
<dbReference type="InterPro" id="IPR020586">
    <property type="entry name" value="PSI_PsaA/B_CS"/>
</dbReference>
<dbReference type="InterPro" id="IPR036408">
    <property type="entry name" value="PSI_PsaA/B_sf"/>
</dbReference>
<dbReference type="NCBIfam" id="TIGR01335">
    <property type="entry name" value="psaA"/>
    <property type="match status" value="1"/>
</dbReference>
<dbReference type="PANTHER" id="PTHR30128">
    <property type="entry name" value="OUTER MEMBRANE PROTEIN, OMPA-RELATED"/>
    <property type="match status" value="1"/>
</dbReference>
<dbReference type="PANTHER" id="PTHR30128:SF19">
    <property type="entry name" value="PHOTOSYSTEM I P700 CHLOROPHYLL A APOPROTEIN A1-RELATED"/>
    <property type="match status" value="1"/>
</dbReference>
<dbReference type="Pfam" id="PF00223">
    <property type="entry name" value="PsaA_PsaB"/>
    <property type="match status" value="1"/>
</dbReference>
<dbReference type="PIRSF" id="PIRSF002905">
    <property type="entry name" value="PSI_A"/>
    <property type="match status" value="1"/>
</dbReference>
<dbReference type="PRINTS" id="PR00257">
    <property type="entry name" value="PHOTSYSPSAAB"/>
</dbReference>
<dbReference type="SUPFAM" id="SSF81558">
    <property type="entry name" value="Photosystem I subunits PsaA/PsaB"/>
    <property type="match status" value="1"/>
</dbReference>
<dbReference type="PROSITE" id="PS00419">
    <property type="entry name" value="PHOTOSYSTEM_I_PSAAB"/>
    <property type="match status" value="1"/>
</dbReference>
<geneLocation type="chloroplast"/>
<sequence>MIIRSPEPEVKILVDRDPIKTSFEDWARPGHFSRTIAKGPDTTTWIWNLHADAHDFDSHTSDLEEISRKVFSAHFGQLSIIFLWLSGMYFHGARFSNYEAWLGDPTHIGPSAQVVWPIVGQEILNGDVGGGFRGIQITSGFFQMWRASGITNELQLYCTAIGALVFAALMLFAGWFHYHKAAPKLAWFQDVESMLNHHLAGLLGLGSLSWAGHQVHVSLPINQFLNAGVDPKEIPLPHEFILNRDLLAQLYPSFAEGATPFFTLNWSKYAEFLTFRGGLDPVTGGLWLTDIAHHHLAIAILFLIAGHMYRTNWGIGHGIKDILEAHKGPFTGQGHKGLYEILTTSWHAQLSINLAMLGSLTIIVAHHMYAMPPYPYLATDYGTQLSLFTHHMWIGGFLIVGAAAHAAIFMVRDYDPTTRYNDLLDRVLRHRDAIISHLNWVCIFLGFHSFGLYIHNDTMSALGRPQDMFSDTAIQLQPVFAQWIQNTHALAPRITAPGATTGTSLTWGGGDLVAVGGKVALLPIPLGTADFLVHHIHAFTIHVTVLILLKGVLFSRSSRLIPDKANLGFRFPCDGPGRGGTCQVSAWDHVFLGLFWMYNSISVVIFHFSWKMQSDVWGSVSDQGVVTHITGGNFAQSSITINGWLRDFLWAQASQVIQSYGSSLSAYGLFFLGAHFVWAFSLMFLFSGRGYWQELIESIVWAHNKLKVAPATQPRALSIVQGRAVGVTHYLLGGIATTWAFFLARIIAVG</sequence>
<reference key="1">
    <citation type="journal article" date="2006" name="Plant Cell Rep.">
        <title>Complete sequence and organization of the cucumber (Cucumis sativus L. cv. Baekmibaekdadagi) chloroplast genome.</title>
        <authorList>
            <person name="Kim J.-S."/>
            <person name="Jung J.D."/>
            <person name="Lee J.-A."/>
            <person name="Park H.-W."/>
            <person name="Oh K.-H."/>
            <person name="Jeong W.J."/>
            <person name="Choi D.-W."/>
            <person name="Liu J.R."/>
            <person name="Cho K.Y."/>
        </authorList>
    </citation>
    <scope>NUCLEOTIDE SEQUENCE [LARGE SCALE GENOMIC DNA]</scope>
    <source>
        <strain>cv. Baekmibaekdadagi</strain>
    </source>
</reference>
<reference key="2">
    <citation type="journal article" date="2007" name="Cell. Mol. Biol. Lett.">
        <title>The complete structure of the cucumber (Cucumis sativus L.) chloroplast genome: its composition and comparative analysis.</title>
        <authorList>
            <person name="Plader W.W."/>
            <person name="Yukawa Y."/>
            <person name="Sugiura M."/>
            <person name="Malepszy S."/>
        </authorList>
    </citation>
    <scope>NUCLEOTIDE SEQUENCE [LARGE SCALE GENOMIC DNA]</scope>
    <source>
        <strain>cv. Borszczagowski</strain>
    </source>
</reference>
<reference key="3">
    <citation type="journal article" date="2007" name="Genome">
        <title>Sequencing cucumber (Cucumis sativus L.) chloroplast genomes identifies differences between chilling-tolerant and -susceptible cucumber lines.</title>
        <authorList>
            <person name="Chung S.-M."/>
            <person name="Gordon V.S."/>
            <person name="Staub J.E."/>
        </authorList>
    </citation>
    <scope>NUCLEOTIDE SEQUENCE [LARGE SCALE GENOMIC DNA]</scope>
    <source>
        <strain>cv. Chipper</strain>
        <strain>cv. Gy14</strain>
    </source>
</reference>
<organism>
    <name type="scientific">Cucumis sativus</name>
    <name type="common">Cucumber</name>
    <dbReference type="NCBI Taxonomy" id="3659"/>
    <lineage>
        <taxon>Eukaryota</taxon>
        <taxon>Viridiplantae</taxon>
        <taxon>Streptophyta</taxon>
        <taxon>Embryophyta</taxon>
        <taxon>Tracheophyta</taxon>
        <taxon>Spermatophyta</taxon>
        <taxon>Magnoliopsida</taxon>
        <taxon>eudicotyledons</taxon>
        <taxon>Gunneridae</taxon>
        <taxon>Pentapetalae</taxon>
        <taxon>rosids</taxon>
        <taxon>fabids</taxon>
        <taxon>Cucurbitales</taxon>
        <taxon>Cucurbitaceae</taxon>
        <taxon>Benincaseae</taxon>
        <taxon>Cucumis</taxon>
    </lineage>
</organism>
<comment type="function">
    <text>PsaA and PsaB bind P700, the primary electron donor of photosystem I (PSI), as well as the electron acceptors A0, A1 and FX. PSI is a plastocyanin-ferredoxin oxidoreductase, converting photonic excitation into a charge separation, which transfers an electron from the donor P700 chlorophyll pair to the spectroscopically characterized acceptors A0, A1, FX, FA and FB in turn. Oxidized P700 is reduced on the lumenal side of the thylakoid membrane by plastocyanin.</text>
</comment>
<comment type="catalytic activity">
    <reaction evidence="1">
        <text>reduced [plastocyanin] + hnu + oxidized [2Fe-2S]-[ferredoxin] = oxidized [plastocyanin] + reduced [2Fe-2S]-[ferredoxin]</text>
        <dbReference type="Rhea" id="RHEA:30407"/>
        <dbReference type="Rhea" id="RHEA-COMP:10000"/>
        <dbReference type="Rhea" id="RHEA-COMP:10001"/>
        <dbReference type="Rhea" id="RHEA-COMP:10039"/>
        <dbReference type="Rhea" id="RHEA-COMP:10040"/>
        <dbReference type="ChEBI" id="CHEBI:29036"/>
        <dbReference type="ChEBI" id="CHEBI:30212"/>
        <dbReference type="ChEBI" id="CHEBI:33737"/>
        <dbReference type="ChEBI" id="CHEBI:33738"/>
        <dbReference type="ChEBI" id="CHEBI:49552"/>
        <dbReference type="EC" id="1.97.1.12"/>
    </reaction>
</comment>
<comment type="cofactor">
    <text evidence="1">P700 is a chlorophyll a/chlorophyll a' dimer, A0 is one or more chlorophyll a, A1 is one or both phylloquinones and FX is a shared 4Fe-4S iron-sulfur center.</text>
</comment>
<comment type="subunit">
    <text evidence="1">The PsaA/B heterodimer binds the P700 chlorophyll special pair and subsequent electron acceptors. PSI consists of a core antenna complex that captures photons, and an electron transfer chain that converts photonic excitation into a charge separation. The eukaryotic PSI reaction center is composed of at least 11 subunits.</text>
</comment>
<comment type="subcellular location">
    <subcellularLocation>
        <location evidence="1">Plastid</location>
        <location evidence="1">Chloroplast thylakoid membrane</location>
        <topology evidence="1">Multi-pass membrane protein</topology>
    </subcellularLocation>
</comment>
<comment type="similarity">
    <text evidence="1">Belongs to the PsaA/PsaB family.</text>
</comment>
<feature type="chain" id="PRO_0000275940" description="Photosystem I P700 chlorophyll a apoprotein A1">
    <location>
        <begin position="1"/>
        <end position="750"/>
    </location>
</feature>
<feature type="transmembrane region" description="Helical; Name=I" evidence="1">
    <location>
        <begin position="70"/>
        <end position="93"/>
    </location>
</feature>
<feature type="transmembrane region" description="Helical; Name=II" evidence="1">
    <location>
        <begin position="156"/>
        <end position="179"/>
    </location>
</feature>
<feature type="transmembrane region" description="Helical; Name=III" evidence="1">
    <location>
        <begin position="195"/>
        <end position="219"/>
    </location>
</feature>
<feature type="transmembrane region" description="Helical; Name=IV" evidence="1">
    <location>
        <begin position="291"/>
        <end position="309"/>
    </location>
</feature>
<feature type="transmembrane region" description="Helical; Name=V" evidence="1">
    <location>
        <begin position="346"/>
        <end position="369"/>
    </location>
</feature>
<feature type="transmembrane region" description="Helical; Name=VI" evidence="1">
    <location>
        <begin position="385"/>
        <end position="411"/>
    </location>
</feature>
<feature type="transmembrane region" description="Helical; Name=VII" evidence="1">
    <location>
        <begin position="433"/>
        <end position="455"/>
    </location>
</feature>
<feature type="transmembrane region" description="Helical; Name=VIII" evidence="1">
    <location>
        <begin position="531"/>
        <end position="549"/>
    </location>
</feature>
<feature type="transmembrane region" description="Helical; Name=IX" evidence="1">
    <location>
        <begin position="589"/>
        <end position="610"/>
    </location>
</feature>
<feature type="transmembrane region" description="Helical; Name=X" evidence="1">
    <location>
        <begin position="664"/>
        <end position="686"/>
    </location>
</feature>
<feature type="transmembrane region" description="Helical; Name=XI" evidence="1">
    <location>
        <begin position="724"/>
        <end position="744"/>
    </location>
</feature>
<feature type="binding site" evidence="1">
    <location>
        <position position="573"/>
    </location>
    <ligand>
        <name>[4Fe-4S] cluster</name>
        <dbReference type="ChEBI" id="CHEBI:49883"/>
        <note>ligand shared between dimeric partners</note>
    </ligand>
</feature>
<feature type="binding site" evidence="1">
    <location>
        <position position="582"/>
    </location>
    <ligand>
        <name>[4Fe-4S] cluster</name>
        <dbReference type="ChEBI" id="CHEBI:49883"/>
        <note>ligand shared between dimeric partners</note>
    </ligand>
</feature>
<feature type="binding site" description="axial binding residue" evidence="1">
    <location>
        <position position="675"/>
    </location>
    <ligand>
        <name>chlorophyll a'</name>
        <dbReference type="ChEBI" id="CHEBI:189419"/>
        <label>A1</label>
    </ligand>
    <ligandPart>
        <name>Mg</name>
        <dbReference type="ChEBI" id="CHEBI:25107"/>
    </ligandPart>
</feature>
<feature type="binding site" description="axial binding residue" evidence="1">
    <location>
        <position position="683"/>
    </location>
    <ligand>
        <name>chlorophyll a</name>
        <dbReference type="ChEBI" id="CHEBI:58416"/>
        <label>A3</label>
    </ligand>
    <ligandPart>
        <name>Mg</name>
        <dbReference type="ChEBI" id="CHEBI:25107"/>
    </ligandPart>
</feature>
<feature type="binding site" evidence="1">
    <location>
        <position position="691"/>
    </location>
    <ligand>
        <name>chlorophyll a</name>
        <dbReference type="ChEBI" id="CHEBI:58416"/>
        <label>A3</label>
    </ligand>
</feature>
<feature type="binding site" evidence="1">
    <location>
        <position position="692"/>
    </location>
    <ligand>
        <name>phylloquinone</name>
        <dbReference type="ChEBI" id="CHEBI:18067"/>
        <label>A</label>
    </ligand>
</feature>
<feature type="sequence conflict" description="In Ref. 2; CAJ00758." evidence="2" ref="2">
    <original>VFAQWIQ</original>
    <variation>RLCSMDT</variation>
    <location>
        <begin position="479"/>
        <end position="485"/>
    </location>
</feature>
<feature type="sequence conflict" description="In Ref. 2; CAJ00758." evidence="2" ref="2">
    <original>W</original>
    <variation>R</variation>
    <location>
        <position position="610"/>
    </location>
</feature>
<feature type="sequence conflict" description="In Ref. 2; CAJ00758." evidence="2" ref="2">
    <original>V</original>
    <variation>L</variation>
    <location>
        <position position="626"/>
    </location>
</feature>
<name>PSAA_CUCSA</name>
<protein>
    <recommendedName>
        <fullName evidence="1">Photosystem I P700 chlorophyll a apoprotein A1</fullName>
        <ecNumber evidence="1">1.97.1.12</ecNumber>
    </recommendedName>
    <alternativeName>
        <fullName evidence="1">PSI-A</fullName>
    </alternativeName>
    <alternativeName>
        <fullName evidence="1">PsaA</fullName>
    </alternativeName>
</protein>
<evidence type="ECO:0000255" key="1">
    <source>
        <dbReference type="HAMAP-Rule" id="MF_00458"/>
    </source>
</evidence>
<evidence type="ECO:0000305" key="2"/>
<proteinExistence type="inferred from homology"/>
<keyword id="KW-0004">4Fe-4S</keyword>
<keyword id="KW-0148">Chlorophyll</keyword>
<keyword id="KW-0150">Chloroplast</keyword>
<keyword id="KW-0157">Chromophore</keyword>
<keyword id="KW-0249">Electron transport</keyword>
<keyword id="KW-0408">Iron</keyword>
<keyword id="KW-0411">Iron-sulfur</keyword>
<keyword id="KW-0460">Magnesium</keyword>
<keyword id="KW-0472">Membrane</keyword>
<keyword id="KW-0479">Metal-binding</keyword>
<keyword id="KW-0560">Oxidoreductase</keyword>
<keyword id="KW-0602">Photosynthesis</keyword>
<keyword id="KW-0603">Photosystem I</keyword>
<keyword id="KW-0934">Plastid</keyword>
<keyword id="KW-0793">Thylakoid</keyword>
<keyword id="KW-0812">Transmembrane</keyword>
<keyword id="KW-1133">Transmembrane helix</keyword>
<keyword id="KW-0813">Transport</keyword>
<gene>
    <name evidence="1" type="primary">psaA</name>
    <name type="ordered locus">CsCp034</name>
</gene>
<accession>Q2QD89</accession>
<accession>A5J1T4</accession>
<accession>Q4VZN3</accession>